<sequence>MIQEKAIIIGGGPCGLSAAIHLKQIGIDALVIEKGNVVNSIYNYPTHQTFFSSSEKLEIGDVAFITENRKPVRIQALSYYREVVKRKNIRVNAFEMVRKVTKTQNNTFVIETSKETYTTPYCIIATGYYDHPNYMGVPGEDLPKVFHYFKEGHPYFDKDVVVIGGKNSSVDAALELVKSGARVTVLYRGNEYSPSIKPWILPEFEALVRNGTIRMEFGACVEKITENEVVFRSGEKELITIKNDFVFAMTGYHPDHQFLEKIGVEIDKETGRPFFNEETMETNVEGVFIAGVIAAGNNANEIFIENGRFHGGHIAAEIAKRENH</sequence>
<proteinExistence type="evidence at protein level"/>
<feature type="chain" id="PRO_0000049684" description="Bacilliredoxin reductase Bdr">
    <location>
        <begin position="1"/>
        <end position="324"/>
    </location>
</feature>
<feature type="modified residue" description="S-bacillithiol cysteine disulfide" evidence="1">
    <location>
        <position position="220"/>
    </location>
</feature>
<feature type="mutagenesis site" description="Retains NADPH-dependent oxidase activity under aerobic conditions, but at a lower level. No effect on S-bacillithiolation. Decreased bacilliredoxin reductase activity. Decreased NADPH-dependent oxidase activity under aerobic conditions; when associated with A-122 or with A-122 and A-220. Loss of bacilliredoxin reductase activity; when associated with A-122 and A-220." evidence="1">
    <original>C</original>
    <variation>A</variation>
    <location>
        <position position="14"/>
    </location>
</feature>
<feature type="mutagenesis site" description="Retains NADPH-dependent oxidase activity under aerobic conditions. No effect on S-bacillithiolation. Decreased bacilliredoxin reductase activity. Decreased NADPH-dependent oxidase activity under aerobic conditions; when associated with A-14 or with A-14 and A-220. Loss of bacilliredoxin reductase activity; when associated with A-14 and A-220." evidence="1">
    <original>C</original>
    <variation>A</variation>
    <location>
        <position position="122"/>
    </location>
</feature>
<feature type="mutagenesis site" description="Retains NADPH-dependent oxidase activity under aerobic conditions. Loss of S-bacillithiolation. Decreased bacilliredoxin reductase activity. Decreased NADPH-dependent oxidase activity under aerobic conditions; when associated with A-14 or with A-14 and A-122. Loss of bacilliredoxin reductase activity; when associated with A-14 and A-122." evidence="1">
    <original>C</original>
    <variation>A</variation>
    <location>
        <position position="220"/>
    </location>
</feature>
<feature type="sequence conflict" description="In Ref. 1; AAC83954." evidence="3" ref="1">
    <original>E</original>
    <variation>G</variation>
    <location>
        <position position="4"/>
    </location>
</feature>
<reference key="1">
    <citation type="journal article" date="1996" name="Microbiology">
        <title>Sequence analysis of the Bacillus subtilis chromosome region between the serA and kdg loci cloned in a yeast artificial chromosome.</title>
        <authorList>
            <person name="Sorokin A.V."/>
            <person name="Azevedo V."/>
            <person name="Zumstein E."/>
            <person name="Galleron N."/>
            <person name="Ehrlich S.D."/>
            <person name="Serror P."/>
        </authorList>
    </citation>
    <scope>NUCLEOTIDE SEQUENCE [GENOMIC DNA]</scope>
    <source>
        <strain>168 / Marburg / ATCC 6051 / DSM 10 / JCM 1465 / NBRC 13719 / NCIMB 3610 / NRRL NRS-744 / VKM B-501</strain>
    </source>
</reference>
<reference key="2">
    <citation type="journal article" date="1997" name="Nature">
        <title>The complete genome sequence of the Gram-positive bacterium Bacillus subtilis.</title>
        <authorList>
            <person name="Kunst F."/>
            <person name="Ogasawara N."/>
            <person name="Moszer I."/>
            <person name="Albertini A.M."/>
            <person name="Alloni G."/>
            <person name="Azevedo V."/>
            <person name="Bertero M.G."/>
            <person name="Bessieres P."/>
            <person name="Bolotin A."/>
            <person name="Borchert S."/>
            <person name="Borriss R."/>
            <person name="Boursier L."/>
            <person name="Brans A."/>
            <person name="Braun M."/>
            <person name="Brignell S.C."/>
            <person name="Bron S."/>
            <person name="Brouillet S."/>
            <person name="Bruschi C.V."/>
            <person name="Caldwell B."/>
            <person name="Capuano V."/>
            <person name="Carter N.M."/>
            <person name="Choi S.-K."/>
            <person name="Codani J.-J."/>
            <person name="Connerton I.F."/>
            <person name="Cummings N.J."/>
            <person name="Daniel R.A."/>
            <person name="Denizot F."/>
            <person name="Devine K.M."/>
            <person name="Duesterhoeft A."/>
            <person name="Ehrlich S.D."/>
            <person name="Emmerson P.T."/>
            <person name="Entian K.-D."/>
            <person name="Errington J."/>
            <person name="Fabret C."/>
            <person name="Ferrari E."/>
            <person name="Foulger D."/>
            <person name="Fritz C."/>
            <person name="Fujita M."/>
            <person name="Fujita Y."/>
            <person name="Fuma S."/>
            <person name="Galizzi A."/>
            <person name="Galleron N."/>
            <person name="Ghim S.-Y."/>
            <person name="Glaser P."/>
            <person name="Goffeau A."/>
            <person name="Golightly E.J."/>
            <person name="Grandi G."/>
            <person name="Guiseppi G."/>
            <person name="Guy B.J."/>
            <person name="Haga K."/>
            <person name="Haiech J."/>
            <person name="Harwood C.R."/>
            <person name="Henaut A."/>
            <person name="Hilbert H."/>
            <person name="Holsappel S."/>
            <person name="Hosono S."/>
            <person name="Hullo M.-F."/>
            <person name="Itaya M."/>
            <person name="Jones L.-M."/>
            <person name="Joris B."/>
            <person name="Karamata D."/>
            <person name="Kasahara Y."/>
            <person name="Klaerr-Blanchard M."/>
            <person name="Klein C."/>
            <person name="Kobayashi Y."/>
            <person name="Koetter P."/>
            <person name="Koningstein G."/>
            <person name="Krogh S."/>
            <person name="Kumano M."/>
            <person name="Kurita K."/>
            <person name="Lapidus A."/>
            <person name="Lardinois S."/>
            <person name="Lauber J."/>
            <person name="Lazarevic V."/>
            <person name="Lee S.-M."/>
            <person name="Levine A."/>
            <person name="Liu H."/>
            <person name="Masuda S."/>
            <person name="Mauel C."/>
            <person name="Medigue C."/>
            <person name="Medina N."/>
            <person name="Mellado R.P."/>
            <person name="Mizuno M."/>
            <person name="Moestl D."/>
            <person name="Nakai S."/>
            <person name="Noback M."/>
            <person name="Noone D."/>
            <person name="O'Reilly M."/>
            <person name="Ogawa K."/>
            <person name="Ogiwara A."/>
            <person name="Oudega B."/>
            <person name="Park S.-H."/>
            <person name="Parro V."/>
            <person name="Pohl T.M."/>
            <person name="Portetelle D."/>
            <person name="Porwollik S."/>
            <person name="Prescott A.M."/>
            <person name="Presecan E."/>
            <person name="Pujic P."/>
            <person name="Purnelle B."/>
            <person name="Rapoport G."/>
            <person name="Rey M."/>
            <person name="Reynolds S."/>
            <person name="Rieger M."/>
            <person name="Rivolta C."/>
            <person name="Rocha E."/>
            <person name="Roche B."/>
            <person name="Rose M."/>
            <person name="Sadaie Y."/>
            <person name="Sato T."/>
            <person name="Scanlan E."/>
            <person name="Schleich S."/>
            <person name="Schroeter R."/>
            <person name="Scoffone F."/>
            <person name="Sekiguchi J."/>
            <person name="Sekowska A."/>
            <person name="Seror S.J."/>
            <person name="Serror P."/>
            <person name="Shin B.-S."/>
            <person name="Soldo B."/>
            <person name="Sorokin A."/>
            <person name="Tacconi E."/>
            <person name="Takagi T."/>
            <person name="Takahashi H."/>
            <person name="Takemaru K."/>
            <person name="Takeuchi M."/>
            <person name="Tamakoshi A."/>
            <person name="Tanaka T."/>
            <person name="Terpstra P."/>
            <person name="Tognoni A."/>
            <person name="Tosato V."/>
            <person name="Uchiyama S."/>
            <person name="Vandenbol M."/>
            <person name="Vannier F."/>
            <person name="Vassarotti A."/>
            <person name="Viari A."/>
            <person name="Wambutt R."/>
            <person name="Wedler E."/>
            <person name="Wedler H."/>
            <person name="Weitzenegger T."/>
            <person name="Winters P."/>
            <person name="Wipat A."/>
            <person name="Yamamoto H."/>
            <person name="Yamane K."/>
            <person name="Yasumoto K."/>
            <person name="Yata K."/>
            <person name="Yoshida K."/>
            <person name="Yoshikawa H.-F."/>
            <person name="Zumstein E."/>
            <person name="Yoshikawa H."/>
            <person name="Danchin A."/>
        </authorList>
    </citation>
    <scope>NUCLEOTIDE SEQUENCE [LARGE SCALE GENOMIC DNA]</scope>
    <source>
        <strain>168</strain>
    </source>
</reference>
<reference key="3">
    <citation type="journal article" date="2009" name="Microbiology">
        <title>From a consortium sequence to a unified sequence: the Bacillus subtilis 168 reference genome a decade later.</title>
        <authorList>
            <person name="Barbe V."/>
            <person name="Cruveiller S."/>
            <person name="Kunst F."/>
            <person name="Lenoble P."/>
            <person name="Meurice G."/>
            <person name="Sekowska A."/>
            <person name="Vallenet D."/>
            <person name="Wang T."/>
            <person name="Moszer I."/>
            <person name="Medigue C."/>
            <person name="Danchin A."/>
        </authorList>
    </citation>
    <scope>SEQUENCE REVISION TO 4</scope>
</reference>
<reference evidence="4" key="4">
    <citation type="journal article" date="2021" name="ISME J.">
        <title>Pervasive prophage recombination occurs during evolution of spore-forming Bacilli.</title>
        <authorList>
            <person name="Dragos A."/>
            <person name="Priyadarshini B."/>
            <person name="Hasan Z."/>
            <person name="Strube M.L."/>
            <person name="Kempen P.J."/>
            <person name="Maroti G."/>
            <person name="Kaspar C."/>
            <person name="Bose B."/>
            <person name="Burton B.M."/>
            <person name="Bischofs I.B."/>
            <person name="Kovacs A.T."/>
        </authorList>
    </citation>
    <scope>NUCLEOTIDE SEQUENCE [LARGE SCALE GENOMIC DNA]</scope>
    <source>
        <strain evidence="4">168 / B410wtB</strain>
    </source>
</reference>
<reference key="5">
    <citation type="journal article" date="2021" name="Redox Biol.">
        <title>The Bacillus subtilis monothiol bacilliredoxin BrxC (YtxJ) and the Bdr (YpdA) disulfide reductase reduce S-bacillithiolated proteins.</title>
        <authorList>
            <person name="Gaballa A."/>
            <person name="Su T.T."/>
            <person name="Helmann J.D."/>
        </authorList>
    </citation>
    <scope>FUNCTION</scope>
    <scope>CATALYTIC ACTIVITY</scope>
    <scope>COFACTOR</scope>
    <scope>INTERACTION WITH BRXC</scope>
    <scope>PTM</scope>
    <scope>IDENTIFICATION BY MASS SPECTROMETRY</scope>
    <scope>POST-TRANSLATIONAL MODIFICATION AT CYS-220</scope>
    <scope>MUTAGENESIS OF CYS-14; CYS-122 AND CYS-220</scope>
    <scope>3D-STRUCTURE MODELING</scope>
    <source>
        <strain evidence="2">168 / CU1065</strain>
    </source>
</reference>
<gene>
    <name evidence="2" type="primary">bdr</name>
    <name evidence="2 4" type="synonym">ypdA</name>
    <name type="ordered locus">BSU22950</name>
    <name evidence="4" type="ORF">HIR78_13750</name>
</gene>
<evidence type="ECO:0000269" key="1">
    <source>
    </source>
</evidence>
<evidence type="ECO:0000303" key="2">
    <source>
    </source>
</evidence>
<evidence type="ECO:0000305" key="3"/>
<evidence type="ECO:0000312" key="4">
    <source>
        <dbReference type="EMBL" id="QJP89022.1"/>
    </source>
</evidence>
<dbReference type="EC" id="1.8.1.-" evidence="1"/>
<dbReference type="EMBL" id="L47648">
    <property type="protein sequence ID" value="AAC83954.1"/>
    <property type="molecule type" value="Genomic_DNA"/>
</dbReference>
<dbReference type="EMBL" id="AL009126">
    <property type="protein sequence ID" value="CAB14211.2"/>
    <property type="molecule type" value="Genomic_DNA"/>
</dbReference>
<dbReference type="EMBL" id="CP052842">
    <property type="protein sequence ID" value="QJP89022.1"/>
    <property type="molecule type" value="Genomic_DNA"/>
</dbReference>
<dbReference type="PIR" id="A69934">
    <property type="entry name" value="A69934"/>
</dbReference>
<dbReference type="RefSeq" id="NP_390176.2">
    <property type="nucleotide sequence ID" value="NC_000964.3"/>
</dbReference>
<dbReference type="RefSeq" id="WP_004399008.1">
    <property type="nucleotide sequence ID" value="NZ_OZ025638.1"/>
</dbReference>
<dbReference type="SMR" id="P50736"/>
<dbReference type="FunCoup" id="P50736">
    <property type="interactions" value="3"/>
</dbReference>
<dbReference type="STRING" id="224308.BSU22950"/>
<dbReference type="jPOST" id="P50736"/>
<dbReference type="PaxDb" id="224308-BSU22950"/>
<dbReference type="EnsemblBacteria" id="CAB14211">
    <property type="protein sequence ID" value="CAB14211"/>
    <property type="gene ID" value="BSU_22950"/>
</dbReference>
<dbReference type="GeneID" id="938977"/>
<dbReference type="KEGG" id="bsu:BSU22950"/>
<dbReference type="PATRIC" id="fig|224308.179.peg.2502"/>
<dbReference type="eggNOG" id="COG0492">
    <property type="taxonomic scope" value="Bacteria"/>
</dbReference>
<dbReference type="InParanoid" id="P50736"/>
<dbReference type="OrthoDB" id="9778740at2"/>
<dbReference type="PhylomeDB" id="P50736"/>
<dbReference type="BioCyc" id="BSUB:BSU22950-MONOMER"/>
<dbReference type="Proteomes" id="UP000001570">
    <property type="component" value="Chromosome"/>
</dbReference>
<dbReference type="GO" id="GO:0050660">
    <property type="term" value="F:flavin adenine dinucleotide binding"/>
    <property type="evidence" value="ECO:0000318"/>
    <property type="project" value="GO_Central"/>
</dbReference>
<dbReference type="GO" id="GO:0004497">
    <property type="term" value="F:monooxygenase activity"/>
    <property type="evidence" value="ECO:0000318"/>
    <property type="project" value="GO_Central"/>
</dbReference>
<dbReference type="Gene3D" id="3.50.50.60">
    <property type="entry name" value="FAD/NAD(P)-binding domain"/>
    <property type="match status" value="2"/>
</dbReference>
<dbReference type="InterPro" id="IPR023856">
    <property type="entry name" value="Bdr"/>
</dbReference>
<dbReference type="InterPro" id="IPR036188">
    <property type="entry name" value="FAD/NAD-bd_sf"/>
</dbReference>
<dbReference type="InterPro" id="IPR050097">
    <property type="entry name" value="Ferredoxin-NADP_redctase_2"/>
</dbReference>
<dbReference type="NCBIfam" id="TIGR04018">
    <property type="entry name" value="Bthiol_YpdA"/>
    <property type="match status" value="1"/>
</dbReference>
<dbReference type="PANTHER" id="PTHR48105">
    <property type="entry name" value="THIOREDOXIN REDUCTASE 1-RELATED-RELATED"/>
    <property type="match status" value="1"/>
</dbReference>
<dbReference type="Pfam" id="PF13738">
    <property type="entry name" value="Pyr_redox_3"/>
    <property type="match status" value="1"/>
</dbReference>
<dbReference type="PRINTS" id="PR00368">
    <property type="entry name" value="FADPNR"/>
</dbReference>
<dbReference type="PRINTS" id="PR00469">
    <property type="entry name" value="PNDRDTASEII"/>
</dbReference>
<dbReference type="SUPFAM" id="SSF51905">
    <property type="entry name" value="FAD/NAD(P)-binding domain"/>
    <property type="match status" value="1"/>
</dbReference>
<organism>
    <name type="scientific">Bacillus subtilis (strain 168)</name>
    <dbReference type="NCBI Taxonomy" id="224308"/>
    <lineage>
        <taxon>Bacteria</taxon>
        <taxon>Bacillati</taxon>
        <taxon>Bacillota</taxon>
        <taxon>Bacilli</taxon>
        <taxon>Bacillales</taxon>
        <taxon>Bacillaceae</taxon>
        <taxon>Bacillus</taxon>
    </lineage>
</organism>
<accession>P50736</accession>
<accession>A0A6M3ZIP2</accession>
<comment type="function">
    <text evidence="1">S-bacillithiolation is the formation of mixed disulfide bonds between protein thiols and the general thiol reductant bacillithiol (BSH) under oxidative stress. BSH is an equivalent of glutathione (GSH) in Firmicutes. This protein is a NADPH-dependent bacilliredoxin reductase, which debacillithiolates (removes BSH) the S-bacillithiolated BrxB (BrxB-SSB), and to a lesser extent BrxC (BrxC-SSB). Involved in a redox cascade increasing the efficacy of BrxB function by reducing BrxB-SSB and thus reactivating it. Has NADPH-dependent oxidase activity under aerobic conditions producing hydrogen peroxide (H(2)O(2)).</text>
</comment>
<comment type="cofactor">
    <cofactor evidence="1">
        <name>FAD</name>
        <dbReference type="ChEBI" id="CHEBI:57692"/>
    </cofactor>
</comment>
<comment type="subunit">
    <text evidence="1">Interacts with BrxC.</text>
</comment>
<comment type="PTM">
    <text evidence="1">C-terminal Cys can react with bacillithiol (BSH) to form mixed disulfides. S-bacillithiolation protects Cys residues against overoxidation by acting as a redox switch in response to oxidative stress.</text>
</comment>
<protein>
    <recommendedName>
        <fullName evidence="2">Bacilliredoxin reductase Bdr</fullName>
        <ecNumber evidence="1">1.8.1.-</ecNumber>
    </recommendedName>
    <alternativeName>
        <fullName evidence="2">Bacillithiol-disulfide reductase</fullName>
        <shortName evidence="2">BSSB reductase</shortName>
    </alternativeName>
    <alternativeName>
        <fullName evidence="2">NADPH-dependent disulfide oxidoreductase</fullName>
    </alternativeName>
    <alternativeName>
        <fullName evidence="2">Thioredoxin reductase-like flavoprotein</fullName>
    </alternativeName>
    <alternativeName>
        <fullName evidence="4">YpdA family putative bacillithiol disulfide reductase</fullName>
    </alternativeName>
</protein>
<name>BDR_BACSU</name>
<keyword id="KW-0285">Flavoprotein</keyword>
<keyword id="KW-0560">Oxidoreductase</keyword>
<keyword id="KW-0676">Redox-active center</keyword>
<keyword id="KW-1185">Reference proteome</keyword>